<keyword id="KW-0002">3D-structure</keyword>
<keyword id="KW-0009">Actin-binding</keyword>
<keyword id="KW-0963">Cytoplasm</keyword>
<keyword id="KW-0206">Cytoskeleton</keyword>
<keyword id="KW-0539">Nucleus</keyword>
<keyword id="KW-0597">Phosphoprotein</keyword>
<keyword id="KW-1185">Reference proteome</keyword>
<organism>
    <name type="scientific">Gallus gallus</name>
    <name type="common">Chicken</name>
    <dbReference type="NCBI Taxonomy" id="9031"/>
    <lineage>
        <taxon>Eukaryota</taxon>
        <taxon>Metazoa</taxon>
        <taxon>Chordata</taxon>
        <taxon>Craniata</taxon>
        <taxon>Vertebrata</taxon>
        <taxon>Euteleostomi</taxon>
        <taxon>Archelosauria</taxon>
        <taxon>Archosauria</taxon>
        <taxon>Dinosauria</taxon>
        <taxon>Saurischia</taxon>
        <taxon>Theropoda</taxon>
        <taxon>Coelurosauria</taxon>
        <taxon>Aves</taxon>
        <taxon>Neognathae</taxon>
        <taxon>Galloanserae</taxon>
        <taxon>Galliformes</taxon>
        <taxon>Phasianidae</taxon>
        <taxon>Phasianinae</taxon>
        <taxon>Gallus</taxon>
    </lineage>
</organism>
<accession>P21566</accession>
<comment type="function">
    <text>Controls reversibly actin polymerization and depolymerization in a pH-sensitive manner. It has the ability to bind G- and F-actin in a 1:1 ratio of cofilin to actin. It is the major component of intranuclear and cytoplasmic actin rods.</text>
</comment>
<comment type="subcellular location">
    <subcellularLocation>
        <location evidence="1">Nucleus matrix</location>
    </subcellularLocation>
    <subcellularLocation>
        <location evidence="1">Cytoplasm</location>
        <location evidence="1">Cytoskeleton</location>
    </subcellularLocation>
</comment>
<comment type="tissue specificity">
    <text>Widely distributed in various tissues.</text>
</comment>
<comment type="PTM">
    <text>The phosphorylation of Ser-24 may prevent recognition of the nuclear localization signal.</text>
</comment>
<comment type="similarity">
    <text evidence="4">Belongs to the actin-binding proteins ADF family.</text>
</comment>
<sequence length="166" mass="18662">MASGVTVNDEVIKVFNDMKVRKSSTPEEIKKRKKAVLFCLSDDKKQIIVEEAKQILVGDIGDTVEDPYTAFVKLLPLNDCRYALYDATYETKESKKEDLVFIFWAPESAPLKSKMIYASSKDAIKKKFTGIKHEWQVNGLDDIKDRSTLGEKLGGNVVVSLEGKPL</sequence>
<proteinExistence type="evidence at protein level"/>
<protein>
    <recommendedName>
        <fullName>Cofilin-2</fullName>
    </recommendedName>
    <alternativeName>
        <fullName>Cofilin, muscle isoform</fullName>
    </alternativeName>
</protein>
<dbReference type="EMBL" id="M55659">
    <property type="protein sequence ID" value="AAA62732.1"/>
    <property type="molecule type" value="mRNA"/>
</dbReference>
<dbReference type="PIR" id="B35703">
    <property type="entry name" value="B35703"/>
</dbReference>
<dbReference type="RefSeq" id="NP_001004406.2">
    <property type="nucleotide sequence ID" value="NM_001004406.2"/>
</dbReference>
<dbReference type="PDB" id="1TVJ">
    <property type="method" value="NMR"/>
    <property type="chains" value="A=1-166"/>
</dbReference>
<dbReference type="PDB" id="5YU8">
    <property type="method" value="EM"/>
    <property type="resolution" value="3.80 A"/>
    <property type="chains" value="H/I/J=1-166"/>
</dbReference>
<dbReference type="PDBsum" id="1TVJ"/>
<dbReference type="PDBsum" id="5YU8"/>
<dbReference type="BMRB" id="P21566"/>
<dbReference type="EMDB" id="EMD-6844"/>
<dbReference type="SMR" id="P21566"/>
<dbReference type="FunCoup" id="P21566">
    <property type="interactions" value="2277"/>
</dbReference>
<dbReference type="STRING" id="9031.ENSGALP00000016266"/>
<dbReference type="PaxDb" id="9031-ENSGALP00000016266"/>
<dbReference type="Ensembl" id="ENSGALT00010015921.1">
    <property type="protein sequence ID" value="ENSGALP00010009190.1"/>
    <property type="gene ID" value="ENSGALG00010006653.1"/>
</dbReference>
<dbReference type="GeneID" id="423320"/>
<dbReference type="KEGG" id="gga:423320"/>
<dbReference type="CTD" id="1073"/>
<dbReference type="VEuPathDB" id="HostDB:geneid_423320"/>
<dbReference type="eggNOG" id="KOG1735">
    <property type="taxonomic scope" value="Eukaryota"/>
</dbReference>
<dbReference type="GeneTree" id="ENSGT00950000183000"/>
<dbReference type="HOGENOM" id="CLU_094004_0_0_1"/>
<dbReference type="InParanoid" id="P21566"/>
<dbReference type="OMA" id="QCRFAVY"/>
<dbReference type="OrthoDB" id="10249245at2759"/>
<dbReference type="PhylomeDB" id="P21566"/>
<dbReference type="TreeFam" id="TF328601"/>
<dbReference type="EvolutionaryTrace" id="P21566"/>
<dbReference type="PRO" id="PR:P21566"/>
<dbReference type="Proteomes" id="UP000000539">
    <property type="component" value="Chromosome 5"/>
</dbReference>
<dbReference type="Bgee" id="ENSGALG00000010027">
    <property type="expression patterns" value="Expressed in skeletal muscle tissue and 12 other cell types or tissues"/>
</dbReference>
<dbReference type="GO" id="GO:0015629">
    <property type="term" value="C:actin cytoskeleton"/>
    <property type="evidence" value="ECO:0000318"/>
    <property type="project" value="GO_Central"/>
</dbReference>
<dbReference type="GO" id="GO:0005737">
    <property type="term" value="C:cytoplasm"/>
    <property type="evidence" value="ECO:0000318"/>
    <property type="project" value="GO_Central"/>
</dbReference>
<dbReference type="GO" id="GO:0016363">
    <property type="term" value="C:nuclear matrix"/>
    <property type="evidence" value="ECO:0007669"/>
    <property type="project" value="UniProtKB-SubCell"/>
</dbReference>
<dbReference type="GO" id="GO:0005634">
    <property type="term" value="C:nucleus"/>
    <property type="evidence" value="ECO:0000304"/>
    <property type="project" value="AgBase"/>
</dbReference>
<dbReference type="GO" id="GO:0051015">
    <property type="term" value="F:actin filament binding"/>
    <property type="evidence" value="ECO:0000318"/>
    <property type="project" value="GO_Central"/>
</dbReference>
<dbReference type="GO" id="GO:0030043">
    <property type="term" value="P:actin filament fragmentation"/>
    <property type="evidence" value="ECO:0000318"/>
    <property type="project" value="GO_Central"/>
</dbReference>
<dbReference type="GO" id="GO:0051014">
    <property type="term" value="P:actin filament severing"/>
    <property type="evidence" value="ECO:0000318"/>
    <property type="project" value="GO_Central"/>
</dbReference>
<dbReference type="CDD" id="cd11286">
    <property type="entry name" value="ADF_cofilin_like"/>
    <property type="match status" value="1"/>
</dbReference>
<dbReference type="FunFam" id="3.40.20.10:FF:000010">
    <property type="entry name" value="Putative destrin"/>
    <property type="match status" value="1"/>
</dbReference>
<dbReference type="Gene3D" id="3.40.20.10">
    <property type="entry name" value="Severin"/>
    <property type="match status" value="1"/>
</dbReference>
<dbReference type="InterPro" id="IPR002108">
    <property type="entry name" value="ADF-H"/>
</dbReference>
<dbReference type="InterPro" id="IPR029006">
    <property type="entry name" value="ADF-H/Gelsolin-like_dom_sf"/>
</dbReference>
<dbReference type="InterPro" id="IPR017904">
    <property type="entry name" value="ADF/Cofilin"/>
</dbReference>
<dbReference type="PANTHER" id="PTHR11913">
    <property type="entry name" value="COFILIN-RELATED"/>
    <property type="match status" value="1"/>
</dbReference>
<dbReference type="Pfam" id="PF00241">
    <property type="entry name" value="Cofilin_ADF"/>
    <property type="match status" value="1"/>
</dbReference>
<dbReference type="PRINTS" id="PR00006">
    <property type="entry name" value="COFILIN"/>
</dbReference>
<dbReference type="SMART" id="SM00102">
    <property type="entry name" value="ADF"/>
    <property type="match status" value="1"/>
</dbReference>
<dbReference type="SUPFAM" id="SSF55753">
    <property type="entry name" value="Actin depolymerizing proteins"/>
    <property type="match status" value="1"/>
</dbReference>
<dbReference type="PROSITE" id="PS51263">
    <property type="entry name" value="ADF_H"/>
    <property type="match status" value="1"/>
</dbReference>
<evidence type="ECO:0000250" key="1"/>
<evidence type="ECO:0000255" key="2"/>
<evidence type="ECO:0000255" key="3">
    <source>
        <dbReference type="PROSITE-ProRule" id="PRU00599"/>
    </source>
</evidence>
<evidence type="ECO:0000305" key="4"/>
<evidence type="ECO:0007829" key="5">
    <source>
        <dbReference type="PDB" id="1TVJ"/>
    </source>
</evidence>
<gene>
    <name type="primary">CFL2</name>
</gene>
<name>COF2_CHICK</name>
<feature type="chain" id="PRO_0000214910" description="Cofilin-2">
    <location>
        <begin position="1"/>
        <end position="166"/>
    </location>
</feature>
<feature type="domain" description="ADF-H" evidence="3">
    <location>
        <begin position="4"/>
        <end position="153"/>
    </location>
</feature>
<feature type="short sequence motif" description="Nuclear localization signal" evidence="2">
    <location>
        <begin position="30"/>
        <end position="34"/>
    </location>
</feature>
<feature type="modified residue" description="Phosphoserine" evidence="1">
    <location>
        <position position="24"/>
    </location>
</feature>
<feature type="helix" evidence="5">
    <location>
        <begin position="9"/>
        <end position="19"/>
    </location>
</feature>
<feature type="helix" evidence="5">
    <location>
        <begin position="26"/>
        <end position="29"/>
    </location>
</feature>
<feature type="strand" evidence="5">
    <location>
        <begin position="33"/>
        <end position="40"/>
    </location>
</feature>
<feature type="strand" evidence="5">
    <location>
        <begin position="44"/>
        <end position="56"/>
    </location>
</feature>
<feature type="turn" evidence="5">
    <location>
        <begin position="57"/>
        <end position="59"/>
    </location>
</feature>
<feature type="turn" evidence="5">
    <location>
        <begin position="61"/>
        <end position="63"/>
    </location>
</feature>
<feature type="helix" evidence="5">
    <location>
        <begin position="67"/>
        <end position="74"/>
    </location>
</feature>
<feature type="strand" evidence="5">
    <location>
        <begin position="81"/>
        <end position="93"/>
    </location>
</feature>
<feature type="strand" evidence="5">
    <location>
        <begin position="95"/>
        <end position="104"/>
    </location>
</feature>
<feature type="helix" evidence="5">
    <location>
        <begin position="111"/>
        <end position="126"/>
    </location>
</feature>
<feature type="turn" evidence="5">
    <location>
        <begin position="127"/>
        <end position="130"/>
    </location>
</feature>
<feature type="strand" evidence="5">
    <location>
        <begin position="134"/>
        <end position="139"/>
    </location>
</feature>
<feature type="helix" evidence="5">
    <location>
        <begin position="140"/>
        <end position="142"/>
    </location>
</feature>
<feature type="helix" evidence="5">
    <location>
        <begin position="146"/>
        <end position="153"/>
    </location>
</feature>
<feature type="strand" evidence="5">
    <location>
        <begin position="158"/>
        <end position="161"/>
    </location>
</feature>
<reference key="1">
    <citation type="journal article" date="1990" name="Biochemistry">
        <title>Sequence of cDNAs encoding actin depolymerizing factor and cofilin of embryonic chicken skeletal muscle: two functionally distinct actin-regulatory proteins exhibit high structural homology.</title>
        <authorList>
            <person name="Abe H."/>
            <person name="Endo T."/>
            <person name="Yamamoto K."/>
            <person name="Obinata T."/>
        </authorList>
    </citation>
    <scope>NUCLEOTIDE SEQUENCE [MRNA]</scope>
    <source>
        <tissue>Skeletal muscle</tissue>
    </source>
</reference>
<reference key="2">
    <citation type="journal article" date="2002" name="J. Biomol. NMR">
        <title>Backbone and side-chain 1H, 15N, and 13C assignments for chick cofilin.</title>
        <authorList>
            <person name="Bains N.P.S."/>
            <person name="Gorbatyuk V.Y."/>
            <person name="Nosworthy N.J."/>
            <person name="Robson S.A."/>
            <person name="Maciejewski M.W."/>
            <person name="dos Remedios C.G."/>
            <person name="King G.F."/>
        </authorList>
    </citation>
    <scope>STRUCTURE BY NMR</scope>
    <scope>SEQUENCE REVISION TO 53-54</scope>
</reference>